<gene>
    <name evidence="1" type="primary">rbfA</name>
    <name type="ordered locus">PputW619_0722</name>
</gene>
<name>RBFA_PSEPW</name>
<reference key="1">
    <citation type="submission" date="2008-02" db="EMBL/GenBank/DDBJ databases">
        <title>Complete sequence of Pseudomonas putida W619.</title>
        <authorList>
            <person name="Copeland A."/>
            <person name="Lucas S."/>
            <person name="Lapidus A."/>
            <person name="Barry K."/>
            <person name="Detter J.C."/>
            <person name="Glavina del Rio T."/>
            <person name="Dalin E."/>
            <person name="Tice H."/>
            <person name="Pitluck S."/>
            <person name="Chain P."/>
            <person name="Malfatti S."/>
            <person name="Shin M."/>
            <person name="Vergez L."/>
            <person name="Schmutz J."/>
            <person name="Larimer F."/>
            <person name="Land M."/>
            <person name="Hauser L."/>
            <person name="Kyrpides N."/>
            <person name="Kim E."/>
            <person name="Taghavi S."/>
            <person name="Vangronsveld D."/>
            <person name="van der Lelie D."/>
            <person name="Richardson P."/>
        </authorList>
    </citation>
    <scope>NUCLEOTIDE SEQUENCE [LARGE SCALE GENOMIC DNA]</scope>
    <source>
        <strain>W619</strain>
    </source>
</reference>
<keyword id="KW-0963">Cytoplasm</keyword>
<keyword id="KW-0690">Ribosome biogenesis</keyword>
<evidence type="ECO:0000255" key="1">
    <source>
        <dbReference type="HAMAP-Rule" id="MF_00003"/>
    </source>
</evidence>
<organism>
    <name type="scientific">Pseudomonas putida (strain W619)</name>
    <dbReference type="NCBI Taxonomy" id="390235"/>
    <lineage>
        <taxon>Bacteria</taxon>
        <taxon>Pseudomonadati</taxon>
        <taxon>Pseudomonadota</taxon>
        <taxon>Gammaproteobacteria</taxon>
        <taxon>Pseudomonadales</taxon>
        <taxon>Pseudomonadaceae</taxon>
        <taxon>Pseudomonas</taxon>
    </lineage>
</organism>
<comment type="function">
    <text evidence="1">One of several proteins that assist in the late maturation steps of the functional core of the 30S ribosomal subunit. Associates with free 30S ribosomal subunits (but not with 30S subunits that are part of 70S ribosomes or polysomes). Required for efficient processing of 16S rRNA. May interact with the 5'-terminal helix region of 16S rRNA.</text>
</comment>
<comment type="subunit">
    <text evidence="1">Monomer. Binds 30S ribosomal subunits, but not 50S ribosomal subunits or 70S ribosomes.</text>
</comment>
<comment type="subcellular location">
    <subcellularLocation>
        <location evidence="1">Cytoplasm</location>
    </subcellularLocation>
</comment>
<comment type="similarity">
    <text evidence="1">Belongs to the RbfA family.</text>
</comment>
<sequence length="132" mass="14961">MAKEYSRTQRIGDQMQRELAELIRREVKDPRVGLVTITAVDVSRDLGHAKVFITVMGEETPDAVQQSLKALNSAASFLRLHLGRSMQLRSVPQLHFHFDESVSRGVHLSALIERAVAEDRLHKDTDEQDTKE</sequence>
<dbReference type="EMBL" id="CP000949">
    <property type="protein sequence ID" value="ACA71227.1"/>
    <property type="molecule type" value="Genomic_DNA"/>
</dbReference>
<dbReference type="SMR" id="B1J2B0"/>
<dbReference type="STRING" id="390235.PputW619_0722"/>
<dbReference type="KEGG" id="ppw:PputW619_0722"/>
<dbReference type="eggNOG" id="COG0858">
    <property type="taxonomic scope" value="Bacteria"/>
</dbReference>
<dbReference type="HOGENOM" id="CLU_089475_5_0_6"/>
<dbReference type="OrthoDB" id="307788at2"/>
<dbReference type="GO" id="GO:0005829">
    <property type="term" value="C:cytosol"/>
    <property type="evidence" value="ECO:0007669"/>
    <property type="project" value="TreeGrafter"/>
</dbReference>
<dbReference type="GO" id="GO:0043024">
    <property type="term" value="F:ribosomal small subunit binding"/>
    <property type="evidence" value="ECO:0007669"/>
    <property type="project" value="TreeGrafter"/>
</dbReference>
<dbReference type="GO" id="GO:0030490">
    <property type="term" value="P:maturation of SSU-rRNA"/>
    <property type="evidence" value="ECO:0007669"/>
    <property type="project" value="UniProtKB-UniRule"/>
</dbReference>
<dbReference type="Gene3D" id="3.30.300.20">
    <property type="match status" value="1"/>
</dbReference>
<dbReference type="HAMAP" id="MF_00003">
    <property type="entry name" value="RbfA"/>
    <property type="match status" value="1"/>
</dbReference>
<dbReference type="InterPro" id="IPR015946">
    <property type="entry name" value="KH_dom-like_a/b"/>
</dbReference>
<dbReference type="InterPro" id="IPR000238">
    <property type="entry name" value="RbfA"/>
</dbReference>
<dbReference type="InterPro" id="IPR023799">
    <property type="entry name" value="RbfA_dom_sf"/>
</dbReference>
<dbReference type="InterPro" id="IPR020053">
    <property type="entry name" value="Ribosome-bd_factorA_CS"/>
</dbReference>
<dbReference type="NCBIfam" id="TIGR00082">
    <property type="entry name" value="rbfA"/>
    <property type="match status" value="1"/>
</dbReference>
<dbReference type="PANTHER" id="PTHR33515">
    <property type="entry name" value="RIBOSOME-BINDING FACTOR A, CHLOROPLASTIC-RELATED"/>
    <property type="match status" value="1"/>
</dbReference>
<dbReference type="PANTHER" id="PTHR33515:SF1">
    <property type="entry name" value="RIBOSOME-BINDING FACTOR A, CHLOROPLASTIC-RELATED"/>
    <property type="match status" value="1"/>
</dbReference>
<dbReference type="Pfam" id="PF02033">
    <property type="entry name" value="RBFA"/>
    <property type="match status" value="1"/>
</dbReference>
<dbReference type="SUPFAM" id="SSF89919">
    <property type="entry name" value="Ribosome-binding factor A, RbfA"/>
    <property type="match status" value="1"/>
</dbReference>
<dbReference type="PROSITE" id="PS01319">
    <property type="entry name" value="RBFA"/>
    <property type="match status" value="1"/>
</dbReference>
<protein>
    <recommendedName>
        <fullName evidence="1">Ribosome-binding factor A</fullName>
    </recommendedName>
</protein>
<proteinExistence type="inferred from homology"/>
<accession>B1J2B0</accession>
<feature type="chain" id="PRO_1000088918" description="Ribosome-binding factor A">
    <location>
        <begin position="1"/>
        <end position="132"/>
    </location>
</feature>